<evidence type="ECO:0000255" key="1">
    <source>
        <dbReference type="HAMAP-Rule" id="MF_00600"/>
    </source>
</evidence>
<keyword id="KW-0067">ATP-binding</keyword>
<keyword id="KW-0143">Chaperone</keyword>
<keyword id="KW-0963">Cytoplasm</keyword>
<keyword id="KW-0413">Isomerase</keyword>
<keyword id="KW-0547">Nucleotide-binding</keyword>
<keyword id="KW-1185">Reference proteome</keyword>
<accession>Q67KB8</accession>
<sequence>MTAKQIIFDEAARRKLQAGVDALANTVKVTLGPRGRNVVLDKKFGAPAVANDGVTIAREIELEDPFENMGAQLVKEVATKTNDVAGDGTTTSTVLAQAIVKEGLKNVTGGANPMILKRGIEKAVQVAVEELRKQAIPVETNKAIAEVAAISANNDREIGELVAKAMDTVGKDGVITVEESKTLHTELETVEGMQFDRGYVSAYMVTDTEKMEAVLNEPYILITDKKISAVQDLLPILEKVVQRGKPLLIIAEDVEGEALATLVVNKLRGTLQVAAVKAPGFGDRRKAMLEDIAILTGGEVVSEELGRKLENATIEMLGQARQVRIEKEKTTIIDGAGSSEAIKNRVAAIKRQIEETTSDFDREKLQERLAKLAGGVAVIKVGAATEVELKEKKLRIEDALNATRAAVEEGIVAGGGVALLQTQKAIDELIKTLEGDEKVGAQIVRRAVEEPLRCIVENGGLEGSVVVEKVRTLPVGHGFDAMKEEYVDMVAAGIIDPVKVTRSALQNAASIAALILTTEALVTEKPEKKENNPAPNMDMM</sequence>
<feature type="chain" id="PRO_0000063565" description="Chaperonin GroEL">
    <location>
        <begin position="1"/>
        <end position="540"/>
    </location>
</feature>
<feature type="binding site" evidence="1">
    <location>
        <begin position="30"/>
        <end position="33"/>
    </location>
    <ligand>
        <name>ATP</name>
        <dbReference type="ChEBI" id="CHEBI:30616"/>
    </ligand>
</feature>
<feature type="binding site" evidence="1">
    <location>
        <begin position="87"/>
        <end position="91"/>
    </location>
    <ligand>
        <name>ATP</name>
        <dbReference type="ChEBI" id="CHEBI:30616"/>
    </ligand>
</feature>
<feature type="binding site" evidence="1">
    <location>
        <position position="415"/>
    </location>
    <ligand>
        <name>ATP</name>
        <dbReference type="ChEBI" id="CHEBI:30616"/>
    </ligand>
</feature>
<feature type="binding site" evidence="1">
    <location>
        <position position="496"/>
    </location>
    <ligand>
        <name>ATP</name>
        <dbReference type="ChEBI" id="CHEBI:30616"/>
    </ligand>
</feature>
<gene>
    <name evidence="1" type="primary">groEL</name>
    <name evidence="1" type="synonym">groL</name>
    <name type="ordered locus">STH2897</name>
</gene>
<reference key="1">
    <citation type="journal article" date="2004" name="Nucleic Acids Res.">
        <title>Genome sequence of Symbiobacterium thermophilum, an uncultivable bacterium that depends on microbial commensalism.</title>
        <authorList>
            <person name="Ueda K."/>
            <person name="Yamashita A."/>
            <person name="Ishikawa J."/>
            <person name="Shimada M."/>
            <person name="Watsuji T."/>
            <person name="Morimura K."/>
            <person name="Ikeda H."/>
            <person name="Hattori M."/>
            <person name="Beppu T."/>
        </authorList>
    </citation>
    <scope>NUCLEOTIDE SEQUENCE [LARGE SCALE GENOMIC DNA]</scope>
    <source>
        <strain>DSM 24528 / JCM 14929 / IAM 14863 / T</strain>
    </source>
</reference>
<protein>
    <recommendedName>
        <fullName evidence="1">Chaperonin GroEL</fullName>
        <ecNumber evidence="1">5.6.1.7</ecNumber>
    </recommendedName>
    <alternativeName>
        <fullName evidence="1">60 kDa chaperonin</fullName>
    </alternativeName>
    <alternativeName>
        <fullName evidence="1">Chaperonin-60</fullName>
        <shortName evidence="1">Cpn60</shortName>
    </alternativeName>
</protein>
<organism>
    <name type="scientific">Symbiobacterium thermophilum (strain DSM 24528 / JCM 14929 / IAM 14863 / T)</name>
    <dbReference type="NCBI Taxonomy" id="292459"/>
    <lineage>
        <taxon>Bacteria</taxon>
        <taxon>Bacillati</taxon>
        <taxon>Bacillota</taxon>
        <taxon>Clostridia</taxon>
        <taxon>Eubacteriales</taxon>
        <taxon>Symbiobacteriaceae</taxon>
        <taxon>Symbiobacterium</taxon>
    </lineage>
</organism>
<comment type="function">
    <text evidence="1">Together with its co-chaperonin GroES, plays an essential role in assisting protein folding. The GroEL-GroES system forms a nano-cage that allows encapsulation of the non-native substrate proteins and provides a physical environment optimized to promote and accelerate protein folding.</text>
</comment>
<comment type="catalytic activity">
    <reaction evidence="1">
        <text>ATP + H2O + a folded polypeptide = ADP + phosphate + an unfolded polypeptide.</text>
        <dbReference type="EC" id="5.6.1.7"/>
    </reaction>
</comment>
<comment type="subunit">
    <text evidence="1">Forms a cylinder of 14 subunits composed of two heptameric rings stacked back-to-back. Interacts with the co-chaperonin GroES.</text>
</comment>
<comment type="subcellular location">
    <subcellularLocation>
        <location evidence="1">Cytoplasm</location>
    </subcellularLocation>
</comment>
<comment type="similarity">
    <text evidence="1">Belongs to the chaperonin (HSP60) family.</text>
</comment>
<name>CH60_SYMTH</name>
<proteinExistence type="inferred from homology"/>
<dbReference type="EC" id="5.6.1.7" evidence="1"/>
<dbReference type="EMBL" id="AP006840">
    <property type="protein sequence ID" value="BAD41880.1"/>
    <property type="molecule type" value="Genomic_DNA"/>
</dbReference>
<dbReference type="RefSeq" id="WP_011197014.1">
    <property type="nucleotide sequence ID" value="NC_006177.1"/>
</dbReference>
<dbReference type="SMR" id="Q67KB8"/>
<dbReference type="STRING" id="292459.STH2897"/>
<dbReference type="KEGG" id="sth:STH2897"/>
<dbReference type="eggNOG" id="COG0459">
    <property type="taxonomic scope" value="Bacteria"/>
</dbReference>
<dbReference type="HOGENOM" id="CLU_016503_3_0_9"/>
<dbReference type="OrthoDB" id="9766614at2"/>
<dbReference type="Proteomes" id="UP000000417">
    <property type="component" value="Chromosome"/>
</dbReference>
<dbReference type="GO" id="GO:0005737">
    <property type="term" value="C:cytoplasm"/>
    <property type="evidence" value="ECO:0007669"/>
    <property type="project" value="UniProtKB-SubCell"/>
</dbReference>
<dbReference type="GO" id="GO:0005524">
    <property type="term" value="F:ATP binding"/>
    <property type="evidence" value="ECO:0007669"/>
    <property type="project" value="UniProtKB-UniRule"/>
</dbReference>
<dbReference type="GO" id="GO:0140662">
    <property type="term" value="F:ATP-dependent protein folding chaperone"/>
    <property type="evidence" value="ECO:0007669"/>
    <property type="project" value="InterPro"/>
</dbReference>
<dbReference type="GO" id="GO:0016853">
    <property type="term" value="F:isomerase activity"/>
    <property type="evidence" value="ECO:0007669"/>
    <property type="project" value="UniProtKB-KW"/>
</dbReference>
<dbReference type="GO" id="GO:0051082">
    <property type="term" value="F:unfolded protein binding"/>
    <property type="evidence" value="ECO:0007669"/>
    <property type="project" value="UniProtKB-UniRule"/>
</dbReference>
<dbReference type="GO" id="GO:0042026">
    <property type="term" value="P:protein refolding"/>
    <property type="evidence" value="ECO:0007669"/>
    <property type="project" value="UniProtKB-UniRule"/>
</dbReference>
<dbReference type="CDD" id="cd03344">
    <property type="entry name" value="GroEL"/>
    <property type="match status" value="1"/>
</dbReference>
<dbReference type="FunFam" id="3.50.7.10:FF:000001">
    <property type="entry name" value="60 kDa chaperonin"/>
    <property type="match status" value="1"/>
</dbReference>
<dbReference type="Gene3D" id="3.50.7.10">
    <property type="entry name" value="GroEL"/>
    <property type="match status" value="1"/>
</dbReference>
<dbReference type="Gene3D" id="1.10.560.10">
    <property type="entry name" value="GroEL-like equatorial domain"/>
    <property type="match status" value="1"/>
</dbReference>
<dbReference type="Gene3D" id="3.30.260.10">
    <property type="entry name" value="TCP-1-like chaperonin intermediate domain"/>
    <property type="match status" value="1"/>
</dbReference>
<dbReference type="HAMAP" id="MF_00600">
    <property type="entry name" value="CH60"/>
    <property type="match status" value="1"/>
</dbReference>
<dbReference type="InterPro" id="IPR018370">
    <property type="entry name" value="Chaperonin_Cpn60_CS"/>
</dbReference>
<dbReference type="InterPro" id="IPR001844">
    <property type="entry name" value="Cpn60/GroEL"/>
</dbReference>
<dbReference type="InterPro" id="IPR002423">
    <property type="entry name" value="Cpn60/GroEL/TCP-1"/>
</dbReference>
<dbReference type="InterPro" id="IPR027409">
    <property type="entry name" value="GroEL-like_apical_dom_sf"/>
</dbReference>
<dbReference type="InterPro" id="IPR027413">
    <property type="entry name" value="GROEL-like_equatorial_sf"/>
</dbReference>
<dbReference type="InterPro" id="IPR027410">
    <property type="entry name" value="TCP-1-like_intermed_sf"/>
</dbReference>
<dbReference type="NCBIfam" id="TIGR02348">
    <property type="entry name" value="GroEL"/>
    <property type="match status" value="1"/>
</dbReference>
<dbReference type="NCBIfam" id="NF000592">
    <property type="entry name" value="PRK00013.1"/>
    <property type="match status" value="1"/>
</dbReference>
<dbReference type="NCBIfam" id="NF009487">
    <property type="entry name" value="PRK12849.1"/>
    <property type="match status" value="1"/>
</dbReference>
<dbReference type="NCBIfam" id="NF009488">
    <property type="entry name" value="PRK12850.1"/>
    <property type="match status" value="1"/>
</dbReference>
<dbReference type="NCBIfam" id="NF009489">
    <property type="entry name" value="PRK12851.1"/>
    <property type="match status" value="1"/>
</dbReference>
<dbReference type="PANTHER" id="PTHR45633">
    <property type="entry name" value="60 KDA HEAT SHOCK PROTEIN, MITOCHONDRIAL"/>
    <property type="match status" value="1"/>
</dbReference>
<dbReference type="Pfam" id="PF00118">
    <property type="entry name" value="Cpn60_TCP1"/>
    <property type="match status" value="1"/>
</dbReference>
<dbReference type="PRINTS" id="PR00298">
    <property type="entry name" value="CHAPERONIN60"/>
</dbReference>
<dbReference type="SUPFAM" id="SSF52029">
    <property type="entry name" value="GroEL apical domain-like"/>
    <property type="match status" value="1"/>
</dbReference>
<dbReference type="SUPFAM" id="SSF48592">
    <property type="entry name" value="GroEL equatorial domain-like"/>
    <property type="match status" value="2"/>
</dbReference>
<dbReference type="PROSITE" id="PS00296">
    <property type="entry name" value="CHAPERONINS_CPN60"/>
    <property type="match status" value="1"/>
</dbReference>